<gene>
    <name evidence="1" type="primary">P</name>
</gene>
<comment type="function">
    <text evidence="1">Multifunctional enzyme that converts the viral RNA genome into dsDNA in viral cytoplasmic capsids. This enzyme displays a DNA polymerase activity that can copy either DNA or RNA templates, and a ribonuclease H (RNase H) activity that cleaves the RNA strand of RNA-DNA heteroduplexes in a partially processive 3'- to 5'-endonucleasic mode. Neo-synthesized pregenomic RNA (pgRNA) are encapsidated together with the P protein, and reverse-transcribed inside the nucleocapsid. Initiation of reverse-transcription occurs first by binding the epsilon loop on the pgRNA genome, and is initiated by protein priming, thereby the 5'-end of (-)DNA is covalently linked to P protein. Partial (+)DNA is synthesized from the (-)DNA template and generates the relaxed circular DNA (RC-DNA) genome. After budding and infection, the RC-DNA migrates in the nucleus, and is converted into a plasmid-like covalently closed circular DNA (cccDNA). The activity of P protein does not seem to be necessary for cccDNA generation, and is presumably released from (+)DNA by host nuclear DNA repair machinery.</text>
</comment>
<comment type="catalytic activity">
    <reaction evidence="1">
        <text>DNA(n) + a 2'-deoxyribonucleoside 5'-triphosphate = DNA(n+1) + diphosphate</text>
        <dbReference type="Rhea" id="RHEA:22508"/>
        <dbReference type="Rhea" id="RHEA-COMP:17339"/>
        <dbReference type="Rhea" id="RHEA-COMP:17340"/>
        <dbReference type="ChEBI" id="CHEBI:33019"/>
        <dbReference type="ChEBI" id="CHEBI:61560"/>
        <dbReference type="ChEBI" id="CHEBI:173112"/>
        <dbReference type="EC" id="2.7.7.7"/>
    </reaction>
</comment>
<comment type="catalytic activity">
    <reaction evidence="1">
        <text>DNA(n) + a 2'-deoxyribonucleoside 5'-triphosphate = DNA(n+1) + diphosphate</text>
        <dbReference type="Rhea" id="RHEA:22508"/>
        <dbReference type="Rhea" id="RHEA-COMP:17339"/>
        <dbReference type="Rhea" id="RHEA-COMP:17340"/>
        <dbReference type="ChEBI" id="CHEBI:33019"/>
        <dbReference type="ChEBI" id="CHEBI:61560"/>
        <dbReference type="ChEBI" id="CHEBI:173112"/>
        <dbReference type="EC" id="2.7.7.49"/>
    </reaction>
</comment>
<comment type="catalytic activity">
    <reaction evidence="1">
        <text>Endonucleolytic cleavage to 5'-phosphomonoester.</text>
        <dbReference type="EC" id="3.1.26.4"/>
    </reaction>
</comment>
<comment type="activity regulation">
    <text evidence="1">Activated by host HSP70 and HSP40 in vitro to be able to bind the epsilon loop of the pgRNA. Because deletion of the RNase H region renders the protein partly chaperone-independent, the chaperones may be needed indirectly to relieve occlusion of the RNA-binding site by this domain. Inhibited by several reverse-transcriptase inhibitors: Lamivudine, Adefovir and Entecavir.</text>
</comment>
<comment type="domain">
    <text evidence="1">Terminal protein domain (TP) is hepadnavirus-specific. Spacer domain is highly variable and separates the TP and RT domains. Polymerase/reverse-transcriptase domain (RT) and ribonuclease H domain (RH) are similar to retrovirus reverse transcriptase/RNase H.</text>
</comment>
<comment type="domain">
    <text evidence="1">The polymerase/reverse transcriptase (RT) and ribonuclease H (RH) domains are structured in five subdomains: finger, palm, thumb, connection and RNase H. Within the palm subdomain, the 'primer grip' region is thought to be involved in the positioning of the primer terminus for accommodating the incoming nucleotide. The RH domain stabilizes the association of RT with primer-template.</text>
</comment>
<comment type="miscellaneous">
    <text evidence="1">Hepadnaviral virions contain probably just one P protein molecule per particle.</text>
</comment>
<comment type="similarity">
    <text evidence="1">Belongs to the hepadnaviridae P protein family.</text>
</comment>
<sequence>MPLSYQHFRKLLLLDDEAGPLEEELPRLADEGLNRRVAEDLNLQLPNVSIPWTHKVGNFTGLYSSTLPVFNPNWQTPSFPDIHLHQDIINKCEQFVGPLTVNEKRRLKLSMPARFYPNSTKYLPLEKGIKPYYPDNVVNHYFQTRHYLHTLWQAGILYKRETTRSASFCGSPYSWEQELQHGAESFHQQSAGIFSRAPVGSSIQSKHQQSRLGLQPQKGLLARGNEGRSWSVRSRVHPTTWRSFGVEPSSSGHTNNFASKSASCLHQSAVRKAAYPTFSTTKRHSSSGHAVELHNISSSSAGSQSKGPVFSCWWLQFRNIEPCSEYCLSHLVSLLDDWGPCTEHGEHHIRIPRTPARVTGGVFLVDKNPHNTAESRLVVDFSQFSRGSTRVPWPKFAVPNLQSLTNLLSSNLSWLSLDVSAAFYHLPLHPAAMPHLLVGSSGLSRYVARLSSNSRILDHQHGTMQNLHDSCSRNLFDSLMLLYKTFGRKLHLYSHPIIMGFRKIPMGVGLSPFLLAQFTSAICSVVRRAFPHCLAFSYMDDVVLGAKSVQHLESLYTAVTNFLLSLGIHLNPNKTKRWGYSLHFMGYVIGSWGTLPQEHIVQKIKNCFRKLPVNRPIDWKVCQRIVGLLGFAAPFTQCGYPALMPLYACIQAKQAFTFSPTYKAFLSQQYSTLYPVARQRSGLCQVFADATPTGWGLVMGHQRMRGTFVAPLPIHTAELLAACFARSRSGAKLIGTDNSVVLSRKYTSFPWLLGCAANWILRGTSFVYVPSALNPADDPSRGRLGLYRPLIRLLFQPTTGRTSLYAVSPSVPSHLPVRVHFASPLHVAWRPP</sequence>
<organismHost>
    <name type="scientific">Pan troglodytes</name>
    <name type="common">Chimpanzee</name>
    <dbReference type="NCBI Taxonomy" id="9598"/>
</organismHost>
<feature type="chain" id="PRO_0000222347" description="Protein P">
    <location>
        <begin position="1"/>
        <end position="832"/>
    </location>
</feature>
<feature type="domain" description="Reverse transcriptase" evidence="1">
    <location>
        <begin position="346"/>
        <end position="589"/>
    </location>
</feature>
<feature type="region of interest" description="Terminal protein domain (TP)" evidence="1">
    <location>
        <begin position="1"/>
        <end position="177"/>
    </location>
</feature>
<feature type="region of interest" description="Spacer" evidence="1">
    <location>
        <begin position="178"/>
        <end position="335"/>
    </location>
</feature>
<feature type="region of interest" description="Polymerase/reverse transcriptase domain (RT)" evidence="1">
    <location>
        <begin position="336"/>
        <end position="679"/>
    </location>
</feature>
<feature type="binding site" evidence="1">
    <location>
        <position position="418"/>
    </location>
    <ligand>
        <name>Mg(2+)</name>
        <dbReference type="ChEBI" id="CHEBI:18420"/>
        <note>catalytic</note>
    </ligand>
</feature>
<feature type="binding site" evidence="1">
    <location>
        <position position="540"/>
    </location>
    <ligand>
        <name>Mg(2+)</name>
        <dbReference type="ChEBI" id="CHEBI:18420"/>
        <note>catalytic</note>
    </ligand>
</feature>
<feature type="binding site" evidence="1">
    <location>
        <position position="541"/>
    </location>
    <ligand>
        <name>Mg(2+)</name>
        <dbReference type="ChEBI" id="CHEBI:18420"/>
        <note>catalytic</note>
    </ligand>
</feature>
<feature type="site" description="Priming of reverse-transcription by covalently linking the first nucleotide of the (-)DNA" evidence="1">
    <location>
        <position position="63"/>
    </location>
</feature>
<evidence type="ECO:0000255" key="1">
    <source>
        <dbReference type="HAMAP-Rule" id="MF_04073"/>
    </source>
</evidence>
<name>DPOL_HBVCP</name>
<protein>
    <recommendedName>
        <fullName evidence="1">Protein P</fullName>
    </recommendedName>
    <domain>
        <recommendedName>
            <fullName evidence="1">DNA-directed DNA polymerase</fullName>
            <ecNumber evidence="1">2.7.7.7</ecNumber>
        </recommendedName>
    </domain>
    <domain>
        <recommendedName>
            <fullName evidence="1">RNA-directed DNA polymerase</fullName>
            <ecNumber evidence="1">2.7.7.49</ecNumber>
        </recommendedName>
    </domain>
    <domain>
        <recommendedName>
            <fullName evidence="1">Ribonuclease H</fullName>
            <ecNumber evidence="1">3.1.26.4</ecNumber>
        </recommendedName>
    </domain>
</protein>
<proteinExistence type="inferred from homology"/>
<accession>P12900</accession>
<organism>
    <name type="scientific">Chimpanzee hepatitis B virus (isolate United Kingdom/LSH/1988)</name>
    <name type="common">HBVcpz</name>
    <dbReference type="NCBI Taxonomy" id="10414"/>
    <lineage>
        <taxon>Viruses</taxon>
        <taxon>Riboviria</taxon>
        <taxon>Pararnavirae</taxon>
        <taxon>Artverviricota</taxon>
        <taxon>Revtraviricetes</taxon>
        <taxon>Blubervirales</taxon>
        <taxon>Hepadnaviridae</taxon>
        <taxon>Orthohepadnavirus</taxon>
        <taxon>Hepatitis B virus</taxon>
    </lineage>
</organism>
<keyword id="KW-0235">DNA replication</keyword>
<keyword id="KW-0238">DNA-binding</keyword>
<keyword id="KW-0239">DNA-directed DNA polymerase</keyword>
<keyword id="KW-0255">Endonuclease</keyword>
<keyword id="KW-0945">Host-virus interaction</keyword>
<keyword id="KW-0378">Hydrolase</keyword>
<keyword id="KW-1090">Inhibition of host innate immune response by virus</keyword>
<keyword id="KW-1113">Inhibition of host RLR pathway by virus</keyword>
<keyword id="KW-0460">Magnesium</keyword>
<keyword id="KW-0479">Metal-binding</keyword>
<keyword id="KW-0511">Multifunctional enzyme</keyword>
<keyword id="KW-0540">Nuclease</keyword>
<keyword id="KW-0548">Nucleotidyltransferase</keyword>
<keyword id="KW-0695">RNA-directed DNA polymerase</keyword>
<keyword id="KW-0808">Transferase</keyword>
<keyword id="KW-0899">Viral immunoevasion</keyword>
<reference key="1">
    <citation type="journal article" date="1988" name="J. Gen. Virol.">
        <title>The complete nucleotide sequence of the genome of a hepatitis B virus isolated from a naturally infected chimpanzee.</title>
        <authorList>
            <person name="Vaudin M."/>
            <person name="Wolstenholme A.J."/>
            <person name="Tsiquaye K.N."/>
            <person name="Zuckerman A.J."/>
            <person name="Harrison T.J."/>
        </authorList>
    </citation>
    <scope>NUCLEOTIDE SEQUENCE [GENOMIC DNA]</scope>
</reference>
<reference key="2">
    <citation type="journal article" date="2007" name="World J. Gastroenterol.">
        <title>Hepatitis B virus replication.</title>
        <authorList>
            <person name="Beck J."/>
            <person name="Nassal M."/>
        </authorList>
    </citation>
    <scope>REVIEW</scope>
</reference>
<dbReference type="EC" id="2.7.7.7" evidence="1"/>
<dbReference type="EC" id="2.7.7.49" evidence="1"/>
<dbReference type="EC" id="3.1.26.4" evidence="1"/>
<dbReference type="EMBL" id="D00220">
    <property type="protein sequence ID" value="BAA00158.1"/>
    <property type="molecule type" value="Genomic_DNA"/>
</dbReference>
<dbReference type="PIR" id="B28885">
    <property type="entry name" value="JDVLCP"/>
</dbReference>
<dbReference type="Proteomes" id="UP000007928">
    <property type="component" value="Segment"/>
</dbReference>
<dbReference type="GO" id="GO:0003677">
    <property type="term" value="F:DNA binding"/>
    <property type="evidence" value="ECO:0007669"/>
    <property type="project" value="UniProtKB-UniRule"/>
</dbReference>
<dbReference type="GO" id="GO:0003887">
    <property type="term" value="F:DNA-directed DNA polymerase activity"/>
    <property type="evidence" value="ECO:0007669"/>
    <property type="project" value="UniProtKB-UniRule"/>
</dbReference>
<dbReference type="GO" id="GO:0046872">
    <property type="term" value="F:metal ion binding"/>
    <property type="evidence" value="ECO:0007669"/>
    <property type="project" value="UniProtKB-UniRule"/>
</dbReference>
<dbReference type="GO" id="GO:0003964">
    <property type="term" value="F:RNA-directed DNA polymerase activity"/>
    <property type="evidence" value="ECO:0007669"/>
    <property type="project" value="UniProtKB-UniRule"/>
</dbReference>
<dbReference type="GO" id="GO:0004523">
    <property type="term" value="F:RNA-DNA hybrid ribonuclease activity"/>
    <property type="evidence" value="ECO:0007669"/>
    <property type="project" value="UniProtKB-UniRule"/>
</dbReference>
<dbReference type="GO" id="GO:0006260">
    <property type="term" value="P:DNA replication"/>
    <property type="evidence" value="ECO:0007669"/>
    <property type="project" value="UniProtKB-UniRule"/>
</dbReference>
<dbReference type="GO" id="GO:0052170">
    <property type="term" value="P:symbiont-mediated suppression of host innate immune response"/>
    <property type="evidence" value="ECO:0007669"/>
    <property type="project" value="UniProtKB-UniRule"/>
</dbReference>
<dbReference type="FunFam" id="3.30.70.270:FF:000009">
    <property type="entry name" value="Protein P"/>
    <property type="match status" value="1"/>
</dbReference>
<dbReference type="Gene3D" id="3.30.70.270">
    <property type="match status" value="1"/>
</dbReference>
<dbReference type="HAMAP" id="MF_04073">
    <property type="entry name" value="HBV_DPOL"/>
    <property type="match status" value="1"/>
</dbReference>
<dbReference type="InterPro" id="IPR043502">
    <property type="entry name" value="DNA/RNA_pol_sf"/>
</dbReference>
<dbReference type="InterPro" id="IPR001462">
    <property type="entry name" value="DNApol_viral_C"/>
</dbReference>
<dbReference type="InterPro" id="IPR000201">
    <property type="entry name" value="DNApol_viral_N"/>
</dbReference>
<dbReference type="InterPro" id="IPR037531">
    <property type="entry name" value="HBV_DPOL"/>
</dbReference>
<dbReference type="InterPro" id="IPR043128">
    <property type="entry name" value="Rev_trsase/Diguanyl_cyclase"/>
</dbReference>
<dbReference type="InterPro" id="IPR000477">
    <property type="entry name" value="RT_dom"/>
</dbReference>
<dbReference type="InterPro" id="IPR051320">
    <property type="entry name" value="Viral_Replic_Matur_Polypro"/>
</dbReference>
<dbReference type="PANTHER" id="PTHR33064:SF29">
    <property type="entry name" value="PEPTIDASE A2 DOMAIN-CONTAINING PROTEIN-RELATED"/>
    <property type="match status" value="1"/>
</dbReference>
<dbReference type="PANTHER" id="PTHR33064">
    <property type="entry name" value="POL PROTEIN"/>
    <property type="match status" value="1"/>
</dbReference>
<dbReference type="Pfam" id="PF00336">
    <property type="entry name" value="DNA_pol_viral_C"/>
    <property type="match status" value="1"/>
</dbReference>
<dbReference type="Pfam" id="PF00242">
    <property type="entry name" value="DNA_pol_viral_N"/>
    <property type="match status" value="1"/>
</dbReference>
<dbReference type="Pfam" id="PF00078">
    <property type="entry name" value="RVT_1"/>
    <property type="match status" value="1"/>
</dbReference>
<dbReference type="SUPFAM" id="SSF56672">
    <property type="entry name" value="DNA/RNA polymerases"/>
    <property type="match status" value="1"/>
</dbReference>
<dbReference type="PROSITE" id="PS50878">
    <property type="entry name" value="RT_POL"/>
    <property type="match status" value="1"/>
</dbReference>